<keyword id="KW-0687">Ribonucleoprotein</keyword>
<keyword id="KW-0689">Ribosomal protein</keyword>
<protein>
    <recommendedName>
        <fullName evidence="1">Small ribosomal subunit protein uS2</fullName>
    </recommendedName>
    <alternativeName>
        <fullName evidence="2">30S ribosomal protein S2</fullName>
    </alternativeName>
</protein>
<accession>B7V7F7</accession>
<sequence length="246" mass="27336">MSQVNMRDMLKAGVHFGHQTRYWNPKMGKFIFGARNKIHIINLEKTLPMFNEALTFVERLAAGKNKILFVGTKRSAGKIVREEAARCGMPYVDHRWLGGMLTNYKTIRQSIKRLRDLETQSQDGTFDKLTKKEALMRSRDLEKLERSLGGIKDMGGLPDALFVIDVDHERIAITEANKLGIPVIGVVDTNSSPEGVDYVIPGNDDAIRAVQLYLNSMAEAVIRGKQGAATSADEFVEEAPAESAEG</sequence>
<evidence type="ECO:0000255" key="1">
    <source>
        <dbReference type="HAMAP-Rule" id="MF_00291"/>
    </source>
</evidence>
<evidence type="ECO:0000305" key="2"/>
<comment type="similarity">
    <text evidence="1">Belongs to the universal ribosomal protein uS2 family.</text>
</comment>
<proteinExistence type="inferred from homology"/>
<gene>
    <name evidence="1" type="primary">rpsB</name>
    <name type="ordered locus">PLES_13791</name>
</gene>
<organism>
    <name type="scientific">Pseudomonas aeruginosa (strain LESB58)</name>
    <dbReference type="NCBI Taxonomy" id="557722"/>
    <lineage>
        <taxon>Bacteria</taxon>
        <taxon>Pseudomonadati</taxon>
        <taxon>Pseudomonadota</taxon>
        <taxon>Gammaproteobacteria</taxon>
        <taxon>Pseudomonadales</taxon>
        <taxon>Pseudomonadaceae</taxon>
        <taxon>Pseudomonas</taxon>
    </lineage>
</organism>
<dbReference type="EMBL" id="FM209186">
    <property type="protein sequence ID" value="CAW26107.1"/>
    <property type="molecule type" value="Genomic_DNA"/>
</dbReference>
<dbReference type="RefSeq" id="WP_003092394.1">
    <property type="nucleotide sequence ID" value="NC_011770.1"/>
</dbReference>
<dbReference type="SMR" id="B7V7F7"/>
<dbReference type="KEGG" id="pag:PLES_13791"/>
<dbReference type="HOGENOM" id="CLU_040318_1_0_6"/>
<dbReference type="GO" id="GO:0022627">
    <property type="term" value="C:cytosolic small ribosomal subunit"/>
    <property type="evidence" value="ECO:0007669"/>
    <property type="project" value="TreeGrafter"/>
</dbReference>
<dbReference type="GO" id="GO:0003735">
    <property type="term" value="F:structural constituent of ribosome"/>
    <property type="evidence" value="ECO:0007669"/>
    <property type="project" value="InterPro"/>
</dbReference>
<dbReference type="GO" id="GO:0006412">
    <property type="term" value="P:translation"/>
    <property type="evidence" value="ECO:0007669"/>
    <property type="project" value="UniProtKB-UniRule"/>
</dbReference>
<dbReference type="CDD" id="cd01425">
    <property type="entry name" value="RPS2"/>
    <property type="match status" value="1"/>
</dbReference>
<dbReference type="FunFam" id="1.10.287.610:FF:000001">
    <property type="entry name" value="30S ribosomal protein S2"/>
    <property type="match status" value="1"/>
</dbReference>
<dbReference type="Gene3D" id="3.40.50.10490">
    <property type="entry name" value="Glucose-6-phosphate isomerase like protein, domain 1"/>
    <property type="match status" value="1"/>
</dbReference>
<dbReference type="Gene3D" id="1.10.287.610">
    <property type="entry name" value="Helix hairpin bin"/>
    <property type="match status" value="1"/>
</dbReference>
<dbReference type="HAMAP" id="MF_00291_B">
    <property type="entry name" value="Ribosomal_uS2_B"/>
    <property type="match status" value="1"/>
</dbReference>
<dbReference type="InterPro" id="IPR001865">
    <property type="entry name" value="Ribosomal_uS2"/>
</dbReference>
<dbReference type="InterPro" id="IPR005706">
    <property type="entry name" value="Ribosomal_uS2_bac/mit/plastid"/>
</dbReference>
<dbReference type="InterPro" id="IPR018130">
    <property type="entry name" value="Ribosomal_uS2_CS"/>
</dbReference>
<dbReference type="InterPro" id="IPR023591">
    <property type="entry name" value="Ribosomal_uS2_flav_dom_sf"/>
</dbReference>
<dbReference type="NCBIfam" id="TIGR01011">
    <property type="entry name" value="rpsB_bact"/>
    <property type="match status" value="1"/>
</dbReference>
<dbReference type="PANTHER" id="PTHR12534">
    <property type="entry name" value="30S RIBOSOMAL PROTEIN S2 PROKARYOTIC AND ORGANELLAR"/>
    <property type="match status" value="1"/>
</dbReference>
<dbReference type="PANTHER" id="PTHR12534:SF0">
    <property type="entry name" value="SMALL RIBOSOMAL SUBUNIT PROTEIN US2M"/>
    <property type="match status" value="1"/>
</dbReference>
<dbReference type="Pfam" id="PF00318">
    <property type="entry name" value="Ribosomal_S2"/>
    <property type="match status" value="1"/>
</dbReference>
<dbReference type="PRINTS" id="PR00395">
    <property type="entry name" value="RIBOSOMALS2"/>
</dbReference>
<dbReference type="SUPFAM" id="SSF52313">
    <property type="entry name" value="Ribosomal protein S2"/>
    <property type="match status" value="1"/>
</dbReference>
<dbReference type="PROSITE" id="PS00962">
    <property type="entry name" value="RIBOSOMAL_S2_1"/>
    <property type="match status" value="1"/>
</dbReference>
<dbReference type="PROSITE" id="PS00963">
    <property type="entry name" value="RIBOSOMAL_S2_2"/>
    <property type="match status" value="1"/>
</dbReference>
<feature type="chain" id="PRO_1000119431" description="Small ribosomal subunit protein uS2">
    <location>
        <begin position="1"/>
        <end position="246"/>
    </location>
</feature>
<reference key="1">
    <citation type="journal article" date="2009" name="Genome Res.">
        <title>Newly introduced genomic prophage islands are critical determinants of in vivo competitiveness in the Liverpool epidemic strain of Pseudomonas aeruginosa.</title>
        <authorList>
            <person name="Winstanley C."/>
            <person name="Langille M.G.I."/>
            <person name="Fothergill J.L."/>
            <person name="Kukavica-Ibrulj I."/>
            <person name="Paradis-Bleau C."/>
            <person name="Sanschagrin F."/>
            <person name="Thomson N.R."/>
            <person name="Winsor G.L."/>
            <person name="Quail M.A."/>
            <person name="Lennard N."/>
            <person name="Bignell A."/>
            <person name="Clarke L."/>
            <person name="Seeger K."/>
            <person name="Saunders D."/>
            <person name="Harris D."/>
            <person name="Parkhill J."/>
            <person name="Hancock R.E.W."/>
            <person name="Brinkman F.S.L."/>
            <person name="Levesque R.C."/>
        </authorList>
    </citation>
    <scope>NUCLEOTIDE SEQUENCE [LARGE SCALE GENOMIC DNA]</scope>
    <source>
        <strain>LESB58</strain>
    </source>
</reference>
<name>RS2_PSEA8</name>